<proteinExistence type="inferred from homology"/>
<reference key="1">
    <citation type="journal article" date="1999" name="Environ. Microbiol.">
        <title>Molecular screening for alkane hydroxylase genes in Gram-negative and Gram-positive strains.</title>
        <authorList>
            <person name="Smits T.H.M."/>
            <person name="Roethlisberger M."/>
            <person name="Witholt B."/>
            <person name="Van Beilen J.B."/>
        </authorList>
    </citation>
    <scope>NUCLEOTIDE SEQUENCE [GENOMIC DNA]</scope>
    <source>
        <strain>P1</strain>
    </source>
</reference>
<reference key="2">
    <citation type="journal article" date="2001" name="Microbiology">
        <title>Analysis of Pseudomonas putida alkane degradation gene clusters and flanking insertion sequences: evolution and regulation of the alk-genes.</title>
        <authorList>
            <person name="Van Beilen J.B."/>
            <person name="Panke S."/>
            <person name="Lucchini S."/>
            <person name="Franchini A.G."/>
            <person name="Roethlisberger M."/>
            <person name="Witholt B."/>
        </authorList>
    </citation>
    <scope>NUCLEOTIDE SEQUENCE [GENOMIC DNA]</scope>
    <source>
        <strain>P1</strain>
    </source>
</reference>
<gene>
    <name type="primary">alkT</name>
</gene>
<protein>
    <recommendedName>
        <fullName>Rubredoxin-NAD(+) reductase</fullName>
        <shortName>RdxR</shortName>
        <ecNumber>1.18.1.1</ecNumber>
    </recommendedName>
</protein>
<keyword id="KW-0963">Cytoplasm</keyword>
<keyword id="KW-0274">FAD</keyword>
<keyword id="KW-0285">Flavoprotein</keyword>
<keyword id="KW-0520">NAD</keyword>
<keyword id="KW-0560">Oxidoreductase</keyword>
<accession>Q9L4M8</accession>
<dbReference type="EC" id="1.18.1.1"/>
<dbReference type="EMBL" id="AJ233397">
    <property type="protein sequence ID" value="CAB69078.1"/>
    <property type="molecule type" value="Genomic_DNA"/>
</dbReference>
<dbReference type="SMR" id="Q9L4M8"/>
<dbReference type="UniPathway" id="UPA00191"/>
<dbReference type="GO" id="GO:0005737">
    <property type="term" value="C:cytoplasm"/>
    <property type="evidence" value="ECO:0007669"/>
    <property type="project" value="UniProtKB-SubCell"/>
</dbReference>
<dbReference type="GO" id="GO:0050660">
    <property type="term" value="F:flavin adenine dinucleotide binding"/>
    <property type="evidence" value="ECO:0000250"/>
    <property type="project" value="UniProtKB"/>
</dbReference>
<dbReference type="GO" id="GO:0016651">
    <property type="term" value="F:oxidoreductase activity, acting on NAD(P)H"/>
    <property type="evidence" value="ECO:0007669"/>
    <property type="project" value="TreeGrafter"/>
</dbReference>
<dbReference type="GO" id="GO:0015044">
    <property type="term" value="F:rubredoxin-NAD+ reductase activity"/>
    <property type="evidence" value="ECO:0007669"/>
    <property type="project" value="UniProtKB-EC"/>
</dbReference>
<dbReference type="GO" id="GO:0015046">
    <property type="term" value="F:rubredoxin-NADP+ reductase activity"/>
    <property type="evidence" value="ECO:0000250"/>
    <property type="project" value="UniProtKB"/>
</dbReference>
<dbReference type="GO" id="GO:0043448">
    <property type="term" value="P:alkane catabolic process"/>
    <property type="evidence" value="ECO:0007669"/>
    <property type="project" value="UniProtKB-UniPathway"/>
</dbReference>
<dbReference type="Gene3D" id="3.30.390.30">
    <property type="match status" value="1"/>
</dbReference>
<dbReference type="Gene3D" id="3.50.50.60">
    <property type="entry name" value="FAD/NAD(P)-binding domain"/>
    <property type="match status" value="2"/>
</dbReference>
<dbReference type="InterPro" id="IPR050446">
    <property type="entry name" value="FAD-oxidoreductase/Apoptosis"/>
</dbReference>
<dbReference type="InterPro" id="IPR036188">
    <property type="entry name" value="FAD/NAD-bd_sf"/>
</dbReference>
<dbReference type="InterPro" id="IPR023753">
    <property type="entry name" value="FAD/NAD-binding_dom"/>
</dbReference>
<dbReference type="InterPro" id="IPR016156">
    <property type="entry name" value="FAD/NAD-linked_Rdtase_dimer_sf"/>
</dbReference>
<dbReference type="InterPro" id="IPR028202">
    <property type="entry name" value="Reductase_C"/>
</dbReference>
<dbReference type="PANTHER" id="PTHR43557">
    <property type="entry name" value="APOPTOSIS-INDUCING FACTOR 1"/>
    <property type="match status" value="1"/>
</dbReference>
<dbReference type="PANTHER" id="PTHR43557:SF2">
    <property type="entry name" value="RIESKE DOMAIN-CONTAINING PROTEIN-RELATED"/>
    <property type="match status" value="1"/>
</dbReference>
<dbReference type="Pfam" id="PF07992">
    <property type="entry name" value="Pyr_redox_2"/>
    <property type="match status" value="1"/>
</dbReference>
<dbReference type="Pfam" id="PF14759">
    <property type="entry name" value="Reductase_C"/>
    <property type="match status" value="1"/>
</dbReference>
<dbReference type="PRINTS" id="PR00368">
    <property type="entry name" value="FADPNR"/>
</dbReference>
<dbReference type="PRINTS" id="PR00411">
    <property type="entry name" value="PNDRDTASEI"/>
</dbReference>
<dbReference type="SUPFAM" id="SSF51905">
    <property type="entry name" value="FAD/NAD(P)-binding domain"/>
    <property type="match status" value="2"/>
</dbReference>
<dbReference type="SUPFAM" id="SSF55424">
    <property type="entry name" value="FAD/NAD-linked reductases, dimerisation (C-terminal) domain"/>
    <property type="match status" value="1"/>
</dbReference>
<sequence>MAIVIVGAGTAGVNAAFWLRQYGYKGGIRLLSRESVTPYQRPPLSKAFLTSETAESAIPLKPESFYTNNNISISLNTQIVSIDVGRKVVAAKDGEEYAYEKLILATGASARRLTCEGSELSGVCYLRSMEDAKNLRRKLVESASVVVLGGGVIGLEVASAAVGIGRRVTVIEAAPRVMARVVTPAAANLVRARLEAEGVGFKLNAKLTSIKGRNGHVNQCVLESGEKIQADLIIVGIGAIPELELATEAALEVSNGVVVDDQMRTSDTSIYAIGDCALARNLFFGTMVRLETIHNAVTQAQIVASSICGTSTPAPTPPRFWSDLKGMTLQGLGALKDYDKLVVAINNETVELEVLAYKQERLIATETINLPKRQGALGGSIKLPD</sequence>
<organism>
    <name type="scientific">Pseudomonas putida</name>
    <name type="common">Arthrobacter siderocapsulatus</name>
    <dbReference type="NCBI Taxonomy" id="303"/>
    <lineage>
        <taxon>Bacteria</taxon>
        <taxon>Pseudomonadati</taxon>
        <taxon>Pseudomonadota</taxon>
        <taxon>Gammaproteobacteria</taxon>
        <taxon>Pseudomonadales</taxon>
        <taxon>Pseudomonadaceae</taxon>
        <taxon>Pseudomonas</taxon>
    </lineage>
</organism>
<name>RURE_PSEPU</name>
<feature type="chain" id="PRO_0000392228" description="Rubredoxin-NAD(+) reductase">
    <location>
        <begin position="1"/>
        <end position="385"/>
    </location>
</feature>
<feature type="binding site" evidence="2">
    <location>
        <begin position="8"/>
        <end position="11"/>
    </location>
    <ligand>
        <name>FAD</name>
        <dbReference type="ChEBI" id="CHEBI:57692"/>
    </ligand>
</feature>
<feature type="binding site" evidence="2">
    <location>
        <begin position="32"/>
        <end position="33"/>
    </location>
    <ligand>
        <name>FAD</name>
        <dbReference type="ChEBI" id="CHEBI:57692"/>
    </ligand>
</feature>
<feature type="binding site" evidence="2">
    <location>
        <position position="79"/>
    </location>
    <ligand>
        <name>FAD</name>
        <dbReference type="ChEBI" id="CHEBI:57692"/>
    </ligand>
</feature>
<feature type="binding site" evidence="2">
    <location>
        <position position="156"/>
    </location>
    <ligand>
        <name>FAD</name>
        <dbReference type="ChEBI" id="CHEBI:57692"/>
    </ligand>
</feature>
<feature type="binding site" evidence="2">
    <location>
        <position position="275"/>
    </location>
    <ligand>
        <name>FAD</name>
        <dbReference type="ChEBI" id="CHEBI:57692"/>
    </ligand>
</feature>
<feature type="binding site" evidence="2">
    <location>
        <position position="293"/>
    </location>
    <ligand>
        <name>FAD</name>
        <dbReference type="ChEBI" id="CHEBI:57692"/>
    </ligand>
</feature>
<evidence type="ECO:0000250" key="1"/>
<evidence type="ECO:0000250" key="2">
    <source>
        <dbReference type="UniProtKB" id="Q9HTK9"/>
    </source>
</evidence>
<evidence type="ECO:0000305" key="3"/>
<comment type="function">
    <text evidence="1">Involved in the hydrocarbon hydroxylating system, which transfers electrons from NADH to rubredoxin reductase and then through rubredoxin to alkane 1 monooxygenase.</text>
</comment>
<comment type="catalytic activity">
    <reaction>
        <text>2 reduced [rubredoxin] + NAD(+) + H(+) = 2 oxidized [rubredoxin] + NADH</text>
        <dbReference type="Rhea" id="RHEA:18597"/>
        <dbReference type="Rhea" id="RHEA-COMP:10302"/>
        <dbReference type="Rhea" id="RHEA-COMP:10303"/>
        <dbReference type="ChEBI" id="CHEBI:15378"/>
        <dbReference type="ChEBI" id="CHEBI:29033"/>
        <dbReference type="ChEBI" id="CHEBI:29034"/>
        <dbReference type="ChEBI" id="CHEBI:57540"/>
        <dbReference type="ChEBI" id="CHEBI:57945"/>
        <dbReference type="EC" id="1.18.1.1"/>
    </reaction>
</comment>
<comment type="cofactor">
    <cofactor evidence="3">
        <name>FAD</name>
        <dbReference type="ChEBI" id="CHEBI:57692"/>
    </cofactor>
</comment>
<comment type="pathway">
    <text>Hydrocarbon metabolism; alkane degradation.</text>
</comment>
<comment type="subunit">
    <text evidence="1">Homodimer.</text>
</comment>
<comment type="subcellular location">
    <subcellularLocation>
        <location evidence="1">Cytoplasm</location>
    </subcellularLocation>
</comment>
<comment type="similarity">
    <text evidence="3">Belongs to the FAD-dependent oxidoreductase family.</text>
</comment>